<reference key="1">
    <citation type="journal article" date="2009" name="J. Bacteriol.">
        <title>Role of conjugative elements in the evolution of the multidrug-resistant pandemic clone Streptococcus pneumoniae Spain23F ST81.</title>
        <authorList>
            <person name="Croucher N.J."/>
            <person name="Walker D."/>
            <person name="Romero P."/>
            <person name="Lennard N."/>
            <person name="Paterson G.K."/>
            <person name="Bason N.C."/>
            <person name="Mitchell A.M."/>
            <person name="Quail M.A."/>
            <person name="Andrew P.W."/>
            <person name="Parkhill J."/>
            <person name="Bentley S.D."/>
            <person name="Mitchell T.J."/>
        </authorList>
    </citation>
    <scope>NUCLEOTIDE SEQUENCE [LARGE SCALE GENOMIC DNA]</scope>
    <source>
        <strain>ATCC 700669 / Spain 23F-1</strain>
    </source>
</reference>
<gene>
    <name type="ordered locus">SPN23F15830</name>
</gene>
<sequence>MTKKQLHLVIVTGMSGAGKTVAIQSFEDLGYFTIDNMPPALLPKFLQLVEIKEDNPKLALVVDMRSRSFFSEIQAVLDELENQDGLDFKILFLDAADKELVARYKETRRSHPLAADGRILDGIKLERELLAPLKNMSQNVVDTTELTPRELRKTLAEQFSDQEQAQSFRIEVMSFGFKYGIPIDADLVFDVRFLPNPYYLPELRNQTGVDEPVYDYVMNHPESEDFYQHLLALIEPILPSYQKEGKSVLTIAMGCTGGQHRSVAFAKRLVQDLSKNWSVNEGHRDKDRRKETVNRS</sequence>
<proteinExistence type="inferred from homology"/>
<evidence type="ECO:0000255" key="1">
    <source>
        <dbReference type="HAMAP-Rule" id="MF_00636"/>
    </source>
</evidence>
<protein>
    <recommendedName>
        <fullName evidence="1">Nucleotide-binding protein SPN23F15830</fullName>
    </recommendedName>
</protein>
<feature type="chain" id="PRO_1000147370" description="Nucleotide-binding protein SPN23F15830">
    <location>
        <begin position="1"/>
        <end position="296"/>
    </location>
</feature>
<feature type="binding site" evidence="1">
    <location>
        <begin position="13"/>
        <end position="20"/>
    </location>
    <ligand>
        <name>ATP</name>
        <dbReference type="ChEBI" id="CHEBI:30616"/>
    </ligand>
</feature>
<feature type="binding site" evidence="1">
    <location>
        <begin position="63"/>
        <end position="66"/>
    </location>
    <ligand>
        <name>GTP</name>
        <dbReference type="ChEBI" id="CHEBI:37565"/>
    </ligand>
</feature>
<accession>B8ZLS8</accession>
<dbReference type="EMBL" id="FM211187">
    <property type="protein sequence ID" value="CAR69361.1"/>
    <property type="molecule type" value="Genomic_DNA"/>
</dbReference>
<dbReference type="SMR" id="B8ZLS8"/>
<dbReference type="KEGG" id="sne:SPN23F15830"/>
<dbReference type="HOGENOM" id="CLU_059558_0_0_9"/>
<dbReference type="GO" id="GO:0005524">
    <property type="term" value="F:ATP binding"/>
    <property type="evidence" value="ECO:0007669"/>
    <property type="project" value="UniProtKB-UniRule"/>
</dbReference>
<dbReference type="GO" id="GO:0005525">
    <property type="term" value="F:GTP binding"/>
    <property type="evidence" value="ECO:0007669"/>
    <property type="project" value="UniProtKB-UniRule"/>
</dbReference>
<dbReference type="Gene3D" id="3.40.50.300">
    <property type="entry name" value="P-loop containing nucleotide triphosphate hydrolases"/>
    <property type="match status" value="1"/>
</dbReference>
<dbReference type="HAMAP" id="MF_00636">
    <property type="entry name" value="RapZ_like"/>
    <property type="match status" value="1"/>
</dbReference>
<dbReference type="InterPro" id="IPR027417">
    <property type="entry name" value="P-loop_NTPase"/>
</dbReference>
<dbReference type="InterPro" id="IPR005337">
    <property type="entry name" value="RapZ-like"/>
</dbReference>
<dbReference type="InterPro" id="IPR053930">
    <property type="entry name" value="RapZ-like_N"/>
</dbReference>
<dbReference type="InterPro" id="IPR053931">
    <property type="entry name" value="RapZ_C"/>
</dbReference>
<dbReference type="NCBIfam" id="NF003828">
    <property type="entry name" value="PRK05416.1"/>
    <property type="match status" value="1"/>
</dbReference>
<dbReference type="PANTHER" id="PTHR30448">
    <property type="entry name" value="RNASE ADAPTER PROTEIN RAPZ"/>
    <property type="match status" value="1"/>
</dbReference>
<dbReference type="PANTHER" id="PTHR30448:SF0">
    <property type="entry name" value="RNASE ADAPTER PROTEIN RAPZ"/>
    <property type="match status" value="1"/>
</dbReference>
<dbReference type="Pfam" id="PF22740">
    <property type="entry name" value="PapZ_C"/>
    <property type="match status" value="1"/>
</dbReference>
<dbReference type="Pfam" id="PF03668">
    <property type="entry name" value="RapZ-like_N"/>
    <property type="match status" value="1"/>
</dbReference>
<dbReference type="PIRSF" id="PIRSF005052">
    <property type="entry name" value="P-loopkin"/>
    <property type="match status" value="1"/>
</dbReference>
<dbReference type="SUPFAM" id="SSF52540">
    <property type="entry name" value="P-loop containing nucleoside triphosphate hydrolases"/>
    <property type="match status" value="1"/>
</dbReference>
<keyword id="KW-0067">ATP-binding</keyword>
<keyword id="KW-0342">GTP-binding</keyword>
<keyword id="KW-0547">Nucleotide-binding</keyword>
<comment type="function">
    <text evidence="1">Displays ATPase and GTPase activities.</text>
</comment>
<comment type="similarity">
    <text evidence="1">Belongs to the RapZ-like family.</text>
</comment>
<organism>
    <name type="scientific">Streptococcus pneumoniae (strain ATCC 700669 / Spain 23F-1)</name>
    <dbReference type="NCBI Taxonomy" id="561276"/>
    <lineage>
        <taxon>Bacteria</taxon>
        <taxon>Bacillati</taxon>
        <taxon>Bacillota</taxon>
        <taxon>Bacilli</taxon>
        <taxon>Lactobacillales</taxon>
        <taxon>Streptococcaceae</taxon>
        <taxon>Streptococcus</taxon>
    </lineage>
</organism>
<name>Y1583_STRPJ</name>